<sequence length="154" mass="17343">MIDPAQSILDIRQILGLLPHRYPFLLVDRVVEYVPGDYIKAYKNVTMNEPFFQGHFPGVPVMPGVLIMEALAQAGGILVVKSTDTAVEDKLFLFTGIESVRFRKPVYPGDKLELHCRLLKHKLKLWKMEGRAYVDGKLAAEAVMTAAVTNREDM</sequence>
<reference key="1">
    <citation type="journal article" date="2009" name="Environ. Microbiol.">
        <title>Contribution of mobile genetic elements to Desulfovibrio vulgaris genome plasticity.</title>
        <authorList>
            <person name="Walker C.B."/>
            <person name="Stolyar S."/>
            <person name="Chivian D."/>
            <person name="Pinel N."/>
            <person name="Gabster J.A."/>
            <person name="Dehal P.S."/>
            <person name="He Z."/>
            <person name="Yang Z.K."/>
            <person name="Yen H.C."/>
            <person name="Zhou J."/>
            <person name="Wall J.D."/>
            <person name="Hazen T.C."/>
            <person name="Arkin A.P."/>
            <person name="Stahl D.A."/>
        </authorList>
    </citation>
    <scope>NUCLEOTIDE SEQUENCE [LARGE SCALE GENOMIC DNA]</scope>
    <source>
        <strain>DP4</strain>
    </source>
</reference>
<accession>A1VBV0</accession>
<proteinExistence type="inferred from homology"/>
<feature type="chain" id="PRO_0000301890" description="3-hydroxyacyl-[acyl-carrier-protein] dehydratase FabZ">
    <location>
        <begin position="1"/>
        <end position="154"/>
    </location>
</feature>
<feature type="active site" evidence="1">
    <location>
        <position position="55"/>
    </location>
</feature>
<comment type="function">
    <text evidence="1">Involved in unsaturated fatty acids biosynthesis. Catalyzes the dehydration of short chain beta-hydroxyacyl-ACPs and long chain saturated and unsaturated beta-hydroxyacyl-ACPs.</text>
</comment>
<comment type="catalytic activity">
    <reaction evidence="1">
        <text>a (3R)-hydroxyacyl-[ACP] = a (2E)-enoyl-[ACP] + H2O</text>
        <dbReference type="Rhea" id="RHEA:13097"/>
        <dbReference type="Rhea" id="RHEA-COMP:9925"/>
        <dbReference type="Rhea" id="RHEA-COMP:9945"/>
        <dbReference type="ChEBI" id="CHEBI:15377"/>
        <dbReference type="ChEBI" id="CHEBI:78784"/>
        <dbReference type="ChEBI" id="CHEBI:78827"/>
        <dbReference type="EC" id="4.2.1.59"/>
    </reaction>
</comment>
<comment type="subcellular location">
    <subcellularLocation>
        <location evidence="1">Cytoplasm</location>
    </subcellularLocation>
</comment>
<comment type="similarity">
    <text evidence="1">Belongs to the thioester dehydratase family. FabZ subfamily.</text>
</comment>
<name>FABZ_NITV4</name>
<keyword id="KW-0963">Cytoplasm</keyword>
<keyword id="KW-0441">Lipid A biosynthesis</keyword>
<keyword id="KW-0444">Lipid biosynthesis</keyword>
<keyword id="KW-0443">Lipid metabolism</keyword>
<keyword id="KW-0456">Lyase</keyword>
<protein>
    <recommendedName>
        <fullName evidence="1">3-hydroxyacyl-[acyl-carrier-protein] dehydratase FabZ</fullName>
        <ecNumber evidence="1">4.2.1.59</ecNumber>
    </recommendedName>
    <alternativeName>
        <fullName evidence="1">(3R)-hydroxymyristoyl-[acyl-carrier-protein] dehydratase</fullName>
        <shortName evidence="1">(3R)-hydroxymyristoyl-ACP dehydrase</shortName>
    </alternativeName>
    <alternativeName>
        <fullName evidence="1">Beta-hydroxyacyl-ACP dehydratase</fullName>
    </alternativeName>
</protein>
<evidence type="ECO:0000255" key="1">
    <source>
        <dbReference type="HAMAP-Rule" id="MF_00406"/>
    </source>
</evidence>
<organism>
    <name type="scientific">Nitratidesulfovibrio vulgaris (strain DP4)</name>
    <name type="common">Desulfovibrio vulgaris</name>
    <dbReference type="NCBI Taxonomy" id="391774"/>
    <lineage>
        <taxon>Bacteria</taxon>
        <taxon>Pseudomonadati</taxon>
        <taxon>Thermodesulfobacteriota</taxon>
        <taxon>Desulfovibrionia</taxon>
        <taxon>Desulfovibrionales</taxon>
        <taxon>Desulfovibrionaceae</taxon>
        <taxon>Nitratidesulfovibrio</taxon>
    </lineage>
</organism>
<dbReference type="EC" id="4.2.1.59" evidence="1"/>
<dbReference type="EMBL" id="CP000527">
    <property type="protein sequence ID" value="ABM27916.1"/>
    <property type="molecule type" value="Genomic_DNA"/>
</dbReference>
<dbReference type="RefSeq" id="WP_010939641.1">
    <property type="nucleotide sequence ID" value="NC_008751.1"/>
</dbReference>
<dbReference type="SMR" id="A1VBV0"/>
<dbReference type="KEGG" id="dvl:Dvul_0895"/>
<dbReference type="HOGENOM" id="CLU_078912_1_2_7"/>
<dbReference type="Proteomes" id="UP000009173">
    <property type="component" value="Chromosome"/>
</dbReference>
<dbReference type="GO" id="GO:0005737">
    <property type="term" value="C:cytoplasm"/>
    <property type="evidence" value="ECO:0007669"/>
    <property type="project" value="UniProtKB-SubCell"/>
</dbReference>
<dbReference type="GO" id="GO:0016020">
    <property type="term" value="C:membrane"/>
    <property type="evidence" value="ECO:0007669"/>
    <property type="project" value="GOC"/>
</dbReference>
<dbReference type="GO" id="GO:0019171">
    <property type="term" value="F:(3R)-hydroxyacyl-[acyl-carrier-protein] dehydratase activity"/>
    <property type="evidence" value="ECO:0007669"/>
    <property type="project" value="UniProtKB-EC"/>
</dbReference>
<dbReference type="GO" id="GO:0006633">
    <property type="term" value="P:fatty acid biosynthetic process"/>
    <property type="evidence" value="ECO:0007669"/>
    <property type="project" value="UniProtKB-UniRule"/>
</dbReference>
<dbReference type="GO" id="GO:0009245">
    <property type="term" value="P:lipid A biosynthetic process"/>
    <property type="evidence" value="ECO:0007669"/>
    <property type="project" value="UniProtKB-UniRule"/>
</dbReference>
<dbReference type="CDD" id="cd01288">
    <property type="entry name" value="FabZ"/>
    <property type="match status" value="1"/>
</dbReference>
<dbReference type="FunFam" id="3.10.129.10:FF:000001">
    <property type="entry name" value="3-hydroxyacyl-[acyl-carrier-protein] dehydratase FabZ"/>
    <property type="match status" value="1"/>
</dbReference>
<dbReference type="Gene3D" id="3.10.129.10">
    <property type="entry name" value="Hotdog Thioesterase"/>
    <property type="match status" value="1"/>
</dbReference>
<dbReference type="HAMAP" id="MF_00406">
    <property type="entry name" value="FabZ"/>
    <property type="match status" value="1"/>
</dbReference>
<dbReference type="InterPro" id="IPR013114">
    <property type="entry name" value="FabA_FabZ"/>
</dbReference>
<dbReference type="InterPro" id="IPR010084">
    <property type="entry name" value="FabZ"/>
</dbReference>
<dbReference type="InterPro" id="IPR029069">
    <property type="entry name" value="HotDog_dom_sf"/>
</dbReference>
<dbReference type="NCBIfam" id="TIGR01750">
    <property type="entry name" value="fabZ"/>
    <property type="match status" value="1"/>
</dbReference>
<dbReference type="NCBIfam" id="NF000582">
    <property type="entry name" value="PRK00006.1"/>
    <property type="match status" value="1"/>
</dbReference>
<dbReference type="PANTHER" id="PTHR30272">
    <property type="entry name" value="3-HYDROXYACYL-[ACYL-CARRIER-PROTEIN] DEHYDRATASE"/>
    <property type="match status" value="1"/>
</dbReference>
<dbReference type="PANTHER" id="PTHR30272:SF1">
    <property type="entry name" value="3-HYDROXYACYL-[ACYL-CARRIER-PROTEIN] DEHYDRATASE"/>
    <property type="match status" value="1"/>
</dbReference>
<dbReference type="Pfam" id="PF07977">
    <property type="entry name" value="FabA"/>
    <property type="match status" value="1"/>
</dbReference>
<dbReference type="SUPFAM" id="SSF54637">
    <property type="entry name" value="Thioesterase/thiol ester dehydrase-isomerase"/>
    <property type="match status" value="1"/>
</dbReference>
<gene>
    <name evidence="1" type="primary">fabZ</name>
    <name type="ordered locus">Dvul_0895</name>
</gene>